<gene>
    <name evidence="1" type="primary">rlmM</name>
    <name type="ordered locus">HD_1396</name>
</gene>
<proteinExistence type="inferred from homology"/>
<name>RLMM_HAEDU</name>
<organism>
    <name type="scientific">Haemophilus ducreyi (strain 35000HP / ATCC 700724)</name>
    <dbReference type="NCBI Taxonomy" id="233412"/>
    <lineage>
        <taxon>Bacteria</taxon>
        <taxon>Pseudomonadati</taxon>
        <taxon>Pseudomonadota</taxon>
        <taxon>Gammaproteobacteria</taxon>
        <taxon>Pasteurellales</taxon>
        <taxon>Pasteurellaceae</taxon>
        <taxon>Haemophilus</taxon>
    </lineage>
</organism>
<evidence type="ECO:0000255" key="1">
    <source>
        <dbReference type="HAMAP-Rule" id="MF_01551"/>
    </source>
</evidence>
<evidence type="ECO:0000305" key="2"/>
<protein>
    <recommendedName>
        <fullName evidence="1">Ribosomal RNA large subunit methyltransferase M</fullName>
        <ecNumber evidence="1">2.1.1.186</ecNumber>
    </recommendedName>
    <alternativeName>
        <fullName evidence="1">23S rRNA (cytidine2498-2'-O)-methyltransferase</fullName>
    </alternativeName>
    <alternativeName>
        <fullName evidence="1">23S rRNA 2'-O-ribose methyltransferase RlmM</fullName>
    </alternativeName>
</protein>
<dbReference type="EC" id="2.1.1.186" evidence="1"/>
<dbReference type="EMBL" id="AE017143">
    <property type="protein sequence ID" value="AAP96208.1"/>
    <property type="status" value="ALT_FRAME"/>
    <property type="molecule type" value="Genomic_DNA"/>
</dbReference>
<dbReference type="SMR" id="Q7VLM7"/>
<dbReference type="STRING" id="233412.HD_1396"/>
<dbReference type="KEGG" id="hdu:HD_1396"/>
<dbReference type="eggNOG" id="COG2933">
    <property type="taxonomic scope" value="Bacteria"/>
</dbReference>
<dbReference type="HOGENOM" id="CLU_043780_0_0_6"/>
<dbReference type="Proteomes" id="UP000001022">
    <property type="component" value="Chromosome"/>
</dbReference>
<dbReference type="GO" id="GO:0005737">
    <property type="term" value="C:cytoplasm"/>
    <property type="evidence" value="ECO:0007669"/>
    <property type="project" value="UniProtKB-SubCell"/>
</dbReference>
<dbReference type="GO" id="GO:0008757">
    <property type="term" value="F:S-adenosylmethionine-dependent methyltransferase activity"/>
    <property type="evidence" value="ECO:0007669"/>
    <property type="project" value="UniProtKB-UniRule"/>
</dbReference>
<dbReference type="GO" id="GO:0032259">
    <property type="term" value="P:methylation"/>
    <property type="evidence" value="ECO:0007669"/>
    <property type="project" value="UniProtKB-KW"/>
</dbReference>
<dbReference type="GO" id="GO:0006364">
    <property type="term" value="P:rRNA processing"/>
    <property type="evidence" value="ECO:0007669"/>
    <property type="project" value="UniProtKB-UniRule"/>
</dbReference>
<dbReference type="Gene3D" id="3.30.2300.20">
    <property type="match status" value="1"/>
</dbReference>
<dbReference type="Gene3D" id="3.30.70.2810">
    <property type="match status" value="1"/>
</dbReference>
<dbReference type="Gene3D" id="3.40.50.150">
    <property type="entry name" value="Vaccinia Virus protein VP39"/>
    <property type="match status" value="1"/>
</dbReference>
<dbReference type="HAMAP" id="MF_01551">
    <property type="entry name" value="23SrRNA_methyltr_M"/>
    <property type="match status" value="1"/>
</dbReference>
<dbReference type="InterPro" id="IPR040739">
    <property type="entry name" value="RlmM_FDX"/>
</dbReference>
<dbReference type="InterPro" id="IPR048646">
    <property type="entry name" value="RlmM_THUMP-like"/>
</dbReference>
<dbReference type="InterPro" id="IPR002877">
    <property type="entry name" value="RNA_MeTrfase_FtsJ_dom"/>
</dbReference>
<dbReference type="InterPro" id="IPR011224">
    <property type="entry name" value="rRNA_MeTrfase_M"/>
</dbReference>
<dbReference type="InterPro" id="IPR029063">
    <property type="entry name" value="SAM-dependent_MTases_sf"/>
</dbReference>
<dbReference type="NCBIfam" id="NF008734">
    <property type="entry name" value="PRK11760.1"/>
    <property type="match status" value="1"/>
</dbReference>
<dbReference type="PANTHER" id="PTHR37524">
    <property type="entry name" value="RIBOSOMAL RNA LARGE SUBUNIT METHYLTRANSFERASE M"/>
    <property type="match status" value="1"/>
</dbReference>
<dbReference type="PANTHER" id="PTHR37524:SF2">
    <property type="entry name" value="RIBOSOMAL RNA METHYLTRANSFERASE FTSJ DOMAIN-CONTAINING PROTEIN"/>
    <property type="match status" value="1"/>
</dbReference>
<dbReference type="Pfam" id="PF01728">
    <property type="entry name" value="FtsJ"/>
    <property type="match status" value="1"/>
</dbReference>
<dbReference type="Pfam" id="PF18125">
    <property type="entry name" value="RlmM_FDX"/>
    <property type="match status" value="1"/>
</dbReference>
<dbReference type="Pfam" id="PF21239">
    <property type="entry name" value="RLMM_N"/>
    <property type="match status" value="1"/>
</dbReference>
<dbReference type="PIRSF" id="PIRSF028774">
    <property type="entry name" value="UCP028774"/>
    <property type="match status" value="1"/>
</dbReference>
<dbReference type="SUPFAM" id="SSF53335">
    <property type="entry name" value="S-adenosyl-L-methionine-dependent methyltransferases"/>
    <property type="match status" value="1"/>
</dbReference>
<feature type="chain" id="PRO_0000070405" description="Ribosomal RNA large subunit methyltransferase M">
    <location>
        <begin position="1"/>
        <end position="360"/>
    </location>
</feature>
<feature type="active site" description="Proton acceptor" evidence="1">
    <location>
        <position position="309"/>
    </location>
</feature>
<feature type="binding site" evidence="1">
    <location>
        <position position="190"/>
    </location>
    <ligand>
        <name>S-adenosyl-L-methionine</name>
        <dbReference type="ChEBI" id="CHEBI:59789"/>
    </ligand>
</feature>
<feature type="binding site" evidence="1">
    <location>
        <begin position="223"/>
        <end position="226"/>
    </location>
    <ligand>
        <name>S-adenosyl-L-methionine</name>
        <dbReference type="ChEBI" id="CHEBI:59789"/>
    </ligand>
</feature>
<feature type="binding site" evidence="1">
    <location>
        <position position="242"/>
    </location>
    <ligand>
        <name>S-adenosyl-L-methionine</name>
        <dbReference type="ChEBI" id="CHEBI:59789"/>
    </ligand>
</feature>
<feature type="binding site" evidence="1">
    <location>
        <position position="262"/>
    </location>
    <ligand>
        <name>S-adenosyl-L-methionine</name>
        <dbReference type="ChEBI" id="CHEBI:59789"/>
    </ligand>
</feature>
<feature type="binding site" evidence="1">
    <location>
        <position position="280"/>
    </location>
    <ligand>
        <name>S-adenosyl-L-methionine</name>
        <dbReference type="ChEBI" id="CHEBI:59789"/>
    </ligand>
</feature>
<accession>Q7VLM7</accession>
<keyword id="KW-0963">Cytoplasm</keyword>
<keyword id="KW-0489">Methyltransferase</keyword>
<keyword id="KW-1185">Reference proteome</keyword>
<keyword id="KW-0698">rRNA processing</keyword>
<keyword id="KW-0949">S-adenosyl-L-methionine</keyword>
<keyword id="KW-0808">Transferase</keyword>
<comment type="function">
    <text evidence="1">Catalyzes the 2'-O-methylation at nucleotide C2498 in 23S rRNA.</text>
</comment>
<comment type="catalytic activity">
    <reaction evidence="1">
        <text>cytidine(2498) in 23S rRNA + S-adenosyl-L-methionine = 2'-O-methylcytidine(2498) in 23S rRNA + S-adenosyl-L-homocysteine + H(+)</text>
        <dbReference type="Rhea" id="RHEA:42788"/>
        <dbReference type="Rhea" id="RHEA-COMP:10244"/>
        <dbReference type="Rhea" id="RHEA-COMP:10245"/>
        <dbReference type="ChEBI" id="CHEBI:15378"/>
        <dbReference type="ChEBI" id="CHEBI:57856"/>
        <dbReference type="ChEBI" id="CHEBI:59789"/>
        <dbReference type="ChEBI" id="CHEBI:74495"/>
        <dbReference type="ChEBI" id="CHEBI:82748"/>
        <dbReference type="EC" id="2.1.1.186"/>
    </reaction>
</comment>
<comment type="subunit">
    <text evidence="1">Monomer.</text>
</comment>
<comment type="subcellular location">
    <subcellularLocation>
        <location evidence="1">Cytoplasm</location>
    </subcellularLocation>
</comment>
<comment type="similarity">
    <text evidence="1">Belongs to the class I-like SAM-binding methyltransferase superfamily. RNA methyltransferase RlmE family. RlmM subfamily.</text>
</comment>
<comment type="sequence caution" evidence="2">
    <conflict type="frameshift">
        <sequence resource="EMBL-CDS" id="AAP96208"/>
    </conflict>
</comment>
<sequence>MNKLALYCRAGFEKELAGEITDKAAQLGVFGFVNLTEQSGYVIFECYQANEADHLAREIKFEQLIFARQMIVVGELLEDLPTADRISPIIAQYKTLQPKHSSALFVETPDTNEAKALLTFCRKFTVPLRNSLKQEGWLTSSDNVKDSISLHILFIRPGCCYVGYAYNHNKSPFFMGIPRLKFPSDAPSRSTLKLEEAILTFIPINQEKKRFNEQMKGVDLGACPGGWTYQLVKRGLFVYAVDHGKIAATLHETGRIEHCVEDGFKFQPPKLKQMDWLVCDMVERPMRISQLIGKWLMNGWCRETIFNLKLPMKKRYHEVQLCLSLFRQLTKQGLCFKLQAKHLYHDREEITVHIVIMGKK</sequence>
<reference key="1">
    <citation type="submission" date="2003-06" db="EMBL/GenBank/DDBJ databases">
        <title>The complete genome sequence of Haemophilus ducreyi.</title>
        <authorList>
            <person name="Munson R.S. Jr."/>
            <person name="Ray W.C."/>
            <person name="Mahairas G."/>
            <person name="Sabo P."/>
            <person name="Mungur R."/>
            <person name="Johnson L."/>
            <person name="Nguyen D."/>
            <person name="Wang J."/>
            <person name="Forst C."/>
            <person name="Hood L."/>
        </authorList>
    </citation>
    <scope>NUCLEOTIDE SEQUENCE [LARGE SCALE GENOMIC DNA]</scope>
    <source>
        <strain>35000HP / ATCC 700724</strain>
    </source>
</reference>